<sequence length="327" mass="37322">MQQLTEIVEQALAAIEQATDLKVLDDIRVDYLGKKGQITDLMKLMGTLSAEEKPKFGQAVNDAKQSVQAKLGEQMELFKARELEAKLAAEQIDVTLPGRTLDNGGLHPVTRTIERIESFFGELGFTVKQGPEIEDDFHNFDALNISEHHPARADHDTFYFNPKVMLRTQTSGVQIRTMETEKPPLRIISPGRVYRNDYDMTHTPMFHQVEGLLVDENVNFAELKGILHDFLRNFFEEDLQVRFRPSYFPFTEPSAEVDVMGKNGKWLEVLGCGMVHPNVLRSVGIDPEKYSGFAFGMGVERLTMLRYGVNDLRAFFENDLRFLKQFK</sequence>
<gene>
    <name evidence="1" type="primary">pheS</name>
    <name type="ordered locus">Sama_1953</name>
</gene>
<protein>
    <recommendedName>
        <fullName evidence="1">Phenylalanine--tRNA ligase alpha subunit</fullName>
        <ecNumber evidence="1">6.1.1.20</ecNumber>
    </recommendedName>
    <alternativeName>
        <fullName evidence="1">Phenylalanyl-tRNA synthetase alpha subunit</fullName>
        <shortName evidence="1">PheRS</shortName>
    </alternativeName>
</protein>
<organism>
    <name type="scientific">Shewanella amazonensis (strain ATCC BAA-1098 / SB2B)</name>
    <dbReference type="NCBI Taxonomy" id="326297"/>
    <lineage>
        <taxon>Bacteria</taxon>
        <taxon>Pseudomonadati</taxon>
        <taxon>Pseudomonadota</taxon>
        <taxon>Gammaproteobacteria</taxon>
        <taxon>Alteromonadales</taxon>
        <taxon>Shewanellaceae</taxon>
        <taxon>Shewanella</taxon>
    </lineage>
</organism>
<name>SYFA_SHEAM</name>
<evidence type="ECO:0000255" key="1">
    <source>
        <dbReference type="HAMAP-Rule" id="MF_00281"/>
    </source>
</evidence>
<proteinExistence type="inferred from homology"/>
<comment type="catalytic activity">
    <reaction evidence="1">
        <text>tRNA(Phe) + L-phenylalanine + ATP = L-phenylalanyl-tRNA(Phe) + AMP + diphosphate + H(+)</text>
        <dbReference type="Rhea" id="RHEA:19413"/>
        <dbReference type="Rhea" id="RHEA-COMP:9668"/>
        <dbReference type="Rhea" id="RHEA-COMP:9699"/>
        <dbReference type="ChEBI" id="CHEBI:15378"/>
        <dbReference type="ChEBI" id="CHEBI:30616"/>
        <dbReference type="ChEBI" id="CHEBI:33019"/>
        <dbReference type="ChEBI" id="CHEBI:58095"/>
        <dbReference type="ChEBI" id="CHEBI:78442"/>
        <dbReference type="ChEBI" id="CHEBI:78531"/>
        <dbReference type="ChEBI" id="CHEBI:456215"/>
        <dbReference type="EC" id="6.1.1.20"/>
    </reaction>
</comment>
<comment type="cofactor">
    <cofactor evidence="1">
        <name>Mg(2+)</name>
        <dbReference type="ChEBI" id="CHEBI:18420"/>
    </cofactor>
    <text evidence="1">Binds 2 magnesium ions per tetramer.</text>
</comment>
<comment type="subunit">
    <text evidence="1">Tetramer of two alpha and two beta subunits.</text>
</comment>
<comment type="subcellular location">
    <subcellularLocation>
        <location evidence="1">Cytoplasm</location>
    </subcellularLocation>
</comment>
<comment type="similarity">
    <text evidence="1">Belongs to the class-II aminoacyl-tRNA synthetase family. Phe-tRNA synthetase alpha subunit type 1 subfamily.</text>
</comment>
<dbReference type="EC" id="6.1.1.20" evidence="1"/>
<dbReference type="EMBL" id="CP000507">
    <property type="protein sequence ID" value="ABM00159.1"/>
    <property type="molecule type" value="Genomic_DNA"/>
</dbReference>
<dbReference type="RefSeq" id="WP_011760066.1">
    <property type="nucleotide sequence ID" value="NC_008700.1"/>
</dbReference>
<dbReference type="SMR" id="A1S702"/>
<dbReference type="STRING" id="326297.Sama_1953"/>
<dbReference type="KEGG" id="saz:Sama_1953"/>
<dbReference type="eggNOG" id="COG0016">
    <property type="taxonomic scope" value="Bacteria"/>
</dbReference>
<dbReference type="HOGENOM" id="CLU_025086_0_1_6"/>
<dbReference type="OrthoDB" id="9800719at2"/>
<dbReference type="Proteomes" id="UP000009175">
    <property type="component" value="Chromosome"/>
</dbReference>
<dbReference type="GO" id="GO:0005737">
    <property type="term" value="C:cytoplasm"/>
    <property type="evidence" value="ECO:0007669"/>
    <property type="project" value="UniProtKB-SubCell"/>
</dbReference>
<dbReference type="GO" id="GO:0005524">
    <property type="term" value="F:ATP binding"/>
    <property type="evidence" value="ECO:0007669"/>
    <property type="project" value="UniProtKB-UniRule"/>
</dbReference>
<dbReference type="GO" id="GO:0000287">
    <property type="term" value="F:magnesium ion binding"/>
    <property type="evidence" value="ECO:0007669"/>
    <property type="project" value="UniProtKB-UniRule"/>
</dbReference>
<dbReference type="GO" id="GO:0004826">
    <property type="term" value="F:phenylalanine-tRNA ligase activity"/>
    <property type="evidence" value="ECO:0007669"/>
    <property type="project" value="UniProtKB-UniRule"/>
</dbReference>
<dbReference type="GO" id="GO:0000049">
    <property type="term" value="F:tRNA binding"/>
    <property type="evidence" value="ECO:0007669"/>
    <property type="project" value="InterPro"/>
</dbReference>
<dbReference type="GO" id="GO:0006432">
    <property type="term" value="P:phenylalanyl-tRNA aminoacylation"/>
    <property type="evidence" value="ECO:0007669"/>
    <property type="project" value="UniProtKB-UniRule"/>
</dbReference>
<dbReference type="CDD" id="cd00496">
    <property type="entry name" value="PheRS_alpha_core"/>
    <property type="match status" value="1"/>
</dbReference>
<dbReference type="FunFam" id="3.30.930.10:FF:000003">
    <property type="entry name" value="Phenylalanine--tRNA ligase alpha subunit"/>
    <property type="match status" value="1"/>
</dbReference>
<dbReference type="Gene3D" id="3.30.930.10">
    <property type="entry name" value="Bira Bifunctional Protein, Domain 2"/>
    <property type="match status" value="1"/>
</dbReference>
<dbReference type="HAMAP" id="MF_00281">
    <property type="entry name" value="Phe_tRNA_synth_alpha1"/>
    <property type="match status" value="1"/>
</dbReference>
<dbReference type="InterPro" id="IPR006195">
    <property type="entry name" value="aa-tRNA-synth_II"/>
</dbReference>
<dbReference type="InterPro" id="IPR045864">
    <property type="entry name" value="aa-tRNA-synth_II/BPL/LPL"/>
</dbReference>
<dbReference type="InterPro" id="IPR004529">
    <property type="entry name" value="Phe-tRNA-synth_IIc_asu"/>
</dbReference>
<dbReference type="InterPro" id="IPR004188">
    <property type="entry name" value="Phe-tRNA_ligase_II_N"/>
</dbReference>
<dbReference type="InterPro" id="IPR022911">
    <property type="entry name" value="Phe_tRNA_ligase_alpha1_bac"/>
</dbReference>
<dbReference type="InterPro" id="IPR002319">
    <property type="entry name" value="Phenylalanyl-tRNA_Synthase"/>
</dbReference>
<dbReference type="InterPro" id="IPR010978">
    <property type="entry name" value="tRNA-bd_arm"/>
</dbReference>
<dbReference type="NCBIfam" id="TIGR00468">
    <property type="entry name" value="pheS"/>
    <property type="match status" value="1"/>
</dbReference>
<dbReference type="PANTHER" id="PTHR11538:SF41">
    <property type="entry name" value="PHENYLALANINE--TRNA LIGASE, MITOCHONDRIAL"/>
    <property type="match status" value="1"/>
</dbReference>
<dbReference type="PANTHER" id="PTHR11538">
    <property type="entry name" value="PHENYLALANYL-TRNA SYNTHETASE"/>
    <property type="match status" value="1"/>
</dbReference>
<dbReference type="Pfam" id="PF02912">
    <property type="entry name" value="Phe_tRNA-synt_N"/>
    <property type="match status" value="1"/>
</dbReference>
<dbReference type="Pfam" id="PF01409">
    <property type="entry name" value="tRNA-synt_2d"/>
    <property type="match status" value="1"/>
</dbReference>
<dbReference type="SUPFAM" id="SSF55681">
    <property type="entry name" value="Class II aaRS and biotin synthetases"/>
    <property type="match status" value="1"/>
</dbReference>
<dbReference type="SUPFAM" id="SSF46589">
    <property type="entry name" value="tRNA-binding arm"/>
    <property type="match status" value="1"/>
</dbReference>
<dbReference type="PROSITE" id="PS50862">
    <property type="entry name" value="AA_TRNA_LIGASE_II"/>
    <property type="match status" value="1"/>
</dbReference>
<feature type="chain" id="PRO_1000006893" description="Phenylalanine--tRNA ligase alpha subunit">
    <location>
        <begin position="1"/>
        <end position="327"/>
    </location>
</feature>
<feature type="binding site" evidence="1">
    <location>
        <position position="252"/>
    </location>
    <ligand>
        <name>Mg(2+)</name>
        <dbReference type="ChEBI" id="CHEBI:18420"/>
        <note>shared with beta subunit</note>
    </ligand>
</feature>
<keyword id="KW-0030">Aminoacyl-tRNA synthetase</keyword>
<keyword id="KW-0067">ATP-binding</keyword>
<keyword id="KW-0963">Cytoplasm</keyword>
<keyword id="KW-0436">Ligase</keyword>
<keyword id="KW-0460">Magnesium</keyword>
<keyword id="KW-0479">Metal-binding</keyword>
<keyword id="KW-0547">Nucleotide-binding</keyword>
<keyword id="KW-0648">Protein biosynthesis</keyword>
<keyword id="KW-1185">Reference proteome</keyword>
<accession>A1S702</accession>
<reference key="1">
    <citation type="submission" date="2006-12" db="EMBL/GenBank/DDBJ databases">
        <title>Complete sequence of Shewanella amazonensis SB2B.</title>
        <authorList>
            <consortium name="US DOE Joint Genome Institute"/>
            <person name="Copeland A."/>
            <person name="Lucas S."/>
            <person name="Lapidus A."/>
            <person name="Barry K."/>
            <person name="Detter J.C."/>
            <person name="Glavina del Rio T."/>
            <person name="Hammon N."/>
            <person name="Israni S."/>
            <person name="Dalin E."/>
            <person name="Tice H."/>
            <person name="Pitluck S."/>
            <person name="Munk A.C."/>
            <person name="Brettin T."/>
            <person name="Bruce D."/>
            <person name="Han C."/>
            <person name="Tapia R."/>
            <person name="Gilna P."/>
            <person name="Schmutz J."/>
            <person name="Larimer F."/>
            <person name="Land M."/>
            <person name="Hauser L."/>
            <person name="Kyrpides N."/>
            <person name="Mikhailova N."/>
            <person name="Fredrickson J."/>
            <person name="Richardson P."/>
        </authorList>
    </citation>
    <scope>NUCLEOTIDE SEQUENCE [LARGE SCALE GENOMIC DNA]</scope>
    <source>
        <strain>ATCC BAA-1098 / SB2B</strain>
    </source>
</reference>